<evidence type="ECO:0000250" key="1"/>
<evidence type="ECO:0000255" key="2"/>
<evidence type="ECO:0000255" key="3">
    <source>
        <dbReference type="PROSITE-ProRule" id="PRU00056"/>
    </source>
</evidence>
<evidence type="ECO:0000256" key="4">
    <source>
        <dbReference type="SAM" id="MobiDB-lite"/>
    </source>
</evidence>
<evidence type="ECO:0000269" key="5">
    <source>
    </source>
</evidence>
<evidence type="ECO:0000305" key="6"/>
<accession>Q94A34</accession>
<accession>Q9SYY7</accession>
<dbReference type="EMBL" id="Z99708">
    <property type="protein sequence ID" value="CAB16843.1"/>
    <property type="status" value="ALT_SEQ"/>
    <property type="molecule type" value="Genomic_DNA"/>
</dbReference>
<dbReference type="EMBL" id="AL161589">
    <property type="protein sequence ID" value="CAB80315.1"/>
    <property type="status" value="ALT_SEQ"/>
    <property type="molecule type" value="Genomic_DNA"/>
</dbReference>
<dbReference type="EMBL" id="CP002687">
    <property type="protein sequence ID" value="AEE86662.1"/>
    <property type="molecule type" value="Genomic_DNA"/>
</dbReference>
<dbReference type="EMBL" id="AY050419">
    <property type="protein sequence ID" value="AAK91435.1"/>
    <property type="molecule type" value="mRNA"/>
</dbReference>
<dbReference type="EMBL" id="BT000834">
    <property type="protein sequence ID" value="AAN33209.1"/>
    <property type="molecule type" value="mRNA"/>
</dbReference>
<dbReference type="PIR" id="G85430">
    <property type="entry name" value="G85430"/>
</dbReference>
<dbReference type="RefSeq" id="NP_568006.1">
    <property type="nucleotide sequence ID" value="NM_119812.4"/>
</dbReference>
<dbReference type="SMR" id="Q94A34"/>
<dbReference type="BioGRID" id="15083">
    <property type="interactions" value="2"/>
</dbReference>
<dbReference type="FunCoup" id="Q94A34">
    <property type="interactions" value="712"/>
</dbReference>
<dbReference type="IntAct" id="Q94A34">
    <property type="interactions" value="1"/>
</dbReference>
<dbReference type="STRING" id="3702.Q94A34"/>
<dbReference type="PaxDb" id="3702-AT4G36490.1"/>
<dbReference type="ProteomicsDB" id="234500"/>
<dbReference type="EnsemblPlants" id="AT4G36490.1">
    <property type="protein sequence ID" value="AT4G36490.1"/>
    <property type="gene ID" value="AT4G36490"/>
</dbReference>
<dbReference type="GeneID" id="829801"/>
<dbReference type="Gramene" id="AT4G36490.1">
    <property type="protein sequence ID" value="AT4G36490.1"/>
    <property type="gene ID" value="AT4G36490"/>
</dbReference>
<dbReference type="KEGG" id="ath:AT4G36490"/>
<dbReference type="Araport" id="AT4G36490"/>
<dbReference type="TAIR" id="AT4G36490">
    <property type="gene designation" value="SFH12"/>
</dbReference>
<dbReference type="eggNOG" id="KOG1471">
    <property type="taxonomic scope" value="Eukaryota"/>
</dbReference>
<dbReference type="HOGENOM" id="CLU_014001_11_1_1"/>
<dbReference type="InParanoid" id="Q94A34"/>
<dbReference type="OMA" id="QQNPFRW"/>
<dbReference type="PhylomeDB" id="Q94A34"/>
<dbReference type="PRO" id="PR:Q94A34"/>
<dbReference type="Proteomes" id="UP000006548">
    <property type="component" value="Chromosome 4"/>
</dbReference>
<dbReference type="ExpressionAtlas" id="Q94A34">
    <property type="expression patterns" value="baseline and differential"/>
</dbReference>
<dbReference type="GO" id="GO:0000139">
    <property type="term" value="C:Golgi membrane"/>
    <property type="evidence" value="ECO:0007669"/>
    <property type="project" value="UniProtKB-SubCell"/>
</dbReference>
<dbReference type="GO" id="GO:0005886">
    <property type="term" value="C:plasma membrane"/>
    <property type="evidence" value="ECO:0007669"/>
    <property type="project" value="UniProtKB-SubCell"/>
</dbReference>
<dbReference type="GO" id="GO:0015031">
    <property type="term" value="P:protein transport"/>
    <property type="evidence" value="ECO:0007669"/>
    <property type="project" value="UniProtKB-KW"/>
</dbReference>
<dbReference type="CDD" id="cd00170">
    <property type="entry name" value="SEC14"/>
    <property type="match status" value="1"/>
</dbReference>
<dbReference type="FunFam" id="3.40.525.10:FF:000011">
    <property type="entry name" value="SEC14 cytosolic factor"/>
    <property type="match status" value="1"/>
</dbReference>
<dbReference type="Gene3D" id="3.40.525.10">
    <property type="entry name" value="CRAL-TRIO lipid binding domain"/>
    <property type="match status" value="1"/>
</dbReference>
<dbReference type="Gene3D" id="1.10.8.20">
    <property type="entry name" value="N-terminal domain of phosphatidylinositol transfer protein sec14p"/>
    <property type="match status" value="1"/>
</dbReference>
<dbReference type="InterPro" id="IPR001251">
    <property type="entry name" value="CRAL-TRIO_dom"/>
</dbReference>
<dbReference type="InterPro" id="IPR036865">
    <property type="entry name" value="CRAL-TRIO_dom_sf"/>
</dbReference>
<dbReference type="InterPro" id="IPR011074">
    <property type="entry name" value="CRAL/TRIO_N_dom"/>
</dbReference>
<dbReference type="InterPro" id="IPR036273">
    <property type="entry name" value="CRAL/TRIO_N_dom_sf"/>
</dbReference>
<dbReference type="InterPro" id="IPR051026">
    <property type="entry name" value="PI/PC_transfer"/>
</dbReference>
<dbReference type="PANTHER" id="PTHR45657">
    <property type="entry name" value="CRAL-TRIO DOMAIN-CONTAINING PROTEIN YKL091C-RELATED"/>
    <property type="match status" value="1"/>
</dbReference>
<dbReference type="PANTHER" id="PTHR45657:SF29">
    <property type="entry name" value="PHOSPHATIDYLINOSITOL_PHOSPHATIDYLCHOLINE TRANSFER PROTEIN SFH12"/>
    <property type="match status" value="1"/>
</dbReference>
<dbReference type="Pfam" id="PF00650">
    <property type="entry name" value="CRAL_TRIO"/>
    <property type="match status" value="1"/>
</dbReference>
<dbReference type="Pfam" id="PF03765">
    <property type="entry name" value="CRAL_TRIO_N"/>
    <property type="match status" value="1"/>
</dbReference>
<dbReference type="SMART" id="SM01100">
    <property type="entry name" value="CRAL_TRIO_N"/>
    <property type="match status" value="1"/>
</dbReference>
<dbReference type="SMART" id="SM00516">
    <property type="entry name" value="SEC14"/>
    <property type="match status" value="1"/>
</dbReference>
<dbReference type="SUPFAM" id="SSF52087">
    <property type="entry name" value="CRAL/TRIO domain"/>
    <property type="match status" value="1"/>
</dbReference>
<dbReference type="SUPFAM" id="SSF46938">
    <property type="entry name" value="CRAL/TRIO N-terminal domain"/>
    <property type="match status" value="1"/>
</dbReference>
<dbReference type="PROSITE" id="PS50191">
    <property type="entry name" value="CRAL_TRIO"/>
    <property type="match status" value="1"/>
</dbReference>
<protein>
    <recommendedName>
        <fullName>Phosphatidylinositol/phosphatidylcholine transfer protein SFH12</fullName>
    </recommendedName>
    <alternativeName>
        <fullName>Protein SEC FOURTEEN HOMOLOGS 12</fullName>
        <shortName>AtSFH12</shortName>
    </alternativeName>
</protein>
<comment type="function">
    <text evidence="1 5">Required for transport of secretory proteins from the Golgi complex (By similarity). Catalyzes the transfer of phosphatidylinositol and phosphatidylcholine between membranes in vitro.</text>
</comment>
<comment type="subcellular location">
    <subcellularLocation>
        <location evidence="1">Golgi apparatus membrane</location>
        <topology evidence="1">Peripheral membrane protein</topology>
    </subcellularLocation>
    <subcellularLocation>
        <location evidence="1">Cell membrane</location>
        <topology evidence="1">Peripheral membrane protein</topology>
    </subcellularLocation>
</comment>
<comment type="tissue specificity">
    <text evidence="5">Specifically expressed in flowers.</text>
</comment>
<comment type="developmental stage">
    <text evidence="5">Detected in the mature and germinating pollen grains.</text>
</comment>
<comment type="similarity">
    <text evidence="6">Belongs to the SFH family.</text>
</comment>
<comment type="sequence caution" evidence="6">
    <conflict type="erroneous gene model prediction">
        <sequence resource="EMBL-CDS" id="CAB16843"/>
    </conflict>
</comment>
<comment type="sequence caution" evidence="6">
    <conflict type="erroneous gene model prediction">
        <sequence resource="EMBL-CDS" id="CAB80315"/>
    </conflict>
</comment>
<keyword id="KW-1003">Cell membrane</keyword>
<keyword id="KW-0175">Coiled coil</keyword>
<keyword id="KW-0333">Golgi apparatus</keyword>
<keyword id="KW-0472">Membrane</keyword>
<keyword id="KW-0653">Protein transport</keyword>
<keyword id="KW-1185">Reference proteome</keyword>
<keyword id="KW-0813">Transport</keyword>
<reference key="1">
    <citation type="journal article" date="1998" name="Nature">
        <title>Analysis of 1.9 Mb of contiguous sequence from chromosome 4 of Arabidopsis thaliana.</title>
        <authorList>
            <person name="Bevan M."/>
            <person name="Bancroft I."/>
            <person name="Bent E."/>
            <person name="Love K."/>
            <person name="Goodman H.M."/>
            <person name="Dean C."/>
            <person name="Bergkamp R."/>
            <person name="Dirkse W."/>
            <person name="van Staveren M."/>
            <person name="Stiekema W."/>
            <person name="Drost L."/>
            <person name="Ridley P."/>
            <person name="Hudson S.-A."/>
            <person name="Patel K."/>
            <person name="Murphy G."/>
            <person name="Piffanelli P."/>
            <person name="Wedler H."/>
            <person name="Wedler E."/>
            <person name="Wambutt R."/>
            <person name="Weitzenegger T."/>
            <person name="Pohl T."/>
            <person name="Terryn N."/>
            <person name="Gielen J."/>
            <person name="Villarroel R."/>
            <person name="De Clercq R."/>
            <person name="van Montagu M."/>
            <person name="Lecharny A."/>
            <person name="Aubourg S."/>
            <person name="Gy I."/>
            <person name="Kreis M."/>
            <person name="Lao N."/>
            <person name="Kavanagh T."/>
            <person name="Hempel S."/>
            <person name="Kotter P."/>
            <person name="Entian K.-D."/>
            <person name="Rieger M."/>
            <person name="Schaefer M."/>
            <person name="Funk B."/>
            <person name="Mueller-Auer S."/>
            <person name="Silvey M."/>
            <person name="James R."/>
            <person name="Monfort A."/>
            <person name="Pons A."/>
            <person name="Puigdomenech P."/>
            <person name="Douka A."/>
            <person name="Voukelatou E."/>
            <person name="Milioni D."/>
            <person name="Hatzopoulos P."/>
            <person name="Piravandi E."/>
            <person name="Obermaier B."/>
            <person name="Hilbert H."/>
            <person name="Duesterhoeft A."/>
            <person name="Moores T."/>
            <person name="Jones J.D.G."/>
            <person name="Eneva T."/>
            <person name="Palme K."/>
            <person name="Benes V."/>
            <person name="Rechmann S."/>
            <person name="Ansorge W."/>
            <person name="Cooke R."/>
            <person name="Berger C."/>
            <person name="Delseny M."/>
            <person name="Voet M."/>
            <person name="Volckaert G."/>
            <person name="Mewes H.-W."/>
            <person name="Klosterman S."/>
            <person name="Schueller C."/>
            <person name="Chalwatzis N."/>
        </authorList>
    </citation>
    <scope>NUCLEOTIDE SEQUENCE [LARGE SCALE GENOMIC DNA]</scope>
    <source>
        <strain>cv. Columbia</strain>
    </source>
</reference>
<reference key="2">
    <citation type="journal article" date="1999" name="Nature">
        <title>Sequence and analysis of chromosome 4 of the plant Arabidopsis thaliana.</title>
        <authorList>
            <person name="Mayer K.F.X."/>
            <person name="Schueller C."/>
            <person name="Wambutt R."/>
            <person name="Murphy G."/>
            <person name="Volckaert G."/>
            <person name="Pohl T."/>
            <person name="Duesterhoeft A."/>
            <person name="Stiekema W."/>
            <person name="Entian K.-D."/>
            <person name="Terryn N."/>
            <person name="Harris B."/>
            <person name="Ansorge W."/>
            <person name="Brandt P."/>
            <person name="Grivell L.A."/>
            <person name="Rieger M."/>
            <person name="Weichselgartner M."/>
            <person name="de Simone V."/>
            <person name="Obermaier B."/>
            <person name="Mache R."/>
            <person name="Mueller M."/>
            <person name="Kreis M."/>
            <person name="Delseny M."/>
            <person name="Puigdomenech P."/>
            <person name="Watson M."/>
            <person name="Schmidtheini T."/>
            <person name="Reichert B."/>
            <person name="Portetelle D."/>
            <person name="Perez-Alonso M."/>
            <person name="Boutry M."/>
            <person name="Bancroft I."/>
            <person name="Vos P."/>
            <person name="Hoheisel J."/>
            <person name="Zimmermann W."/>
            <person name="Wedler H."/>
            <person name="Ridley P."/>
            <person name="Langham S.-A."/>
            <person name="McCullagh B."/>
            <person name="Bilham L."/>
            <person name="Robben J."/>
            <person name="van der Schueren J."/>
            <person name="Grymonprez B."/>
            <person name="Chuang Y.-J."/>
            <person name="Vandenbussche F."/>
            <person name="Braeken M."/>
            <person name="Weltjens I."/>
            <person name="Voet M."/>
            <person name="Bastiaens I."/>
            <person name="Aert R."/>
            <person name="Defoor E."/>
            <person name="Weitzenegger T."/>
            <person name="Bothe G."/>
            <person name="Ramsperger U."/>
            <person name="Hilbert H."/>
            <person name="Braun M."/>
            <person name="Holzer E."/>
            <person name="Brandt A."/>
            <person name="Peters S."/>
            <person name="van Staveren M."/>
            <person name="Dirkse W."/>
            <person name="Mooijman P."/>
            <person name="Klein Lankhorst R."/>
            <person name="Rose M."/>
            <person name="Hauf J."/>
            <person name="Koetter P."/>
            <person name="Berneiser S."/>
            <person name="Hempel S."/>
            <person name="Feldpausch M."/>
            <person name="Lamberth S."/>
            <person name="Van den Daele H."/>
            <person name="De Keyser A."/>
            <person name="Buysshaert C."/>
            <person name="Gielen J."/>
            <person name="Villarroel R."/>
            <person name="De Clercq R."/>
            <person name="van Montagu M."/>
            <person name="Rogers J."/>
            <person name="Cronin A."/>
            <person name="Quail M.A."/>
            <person name="Bray-Allen S."/>
            <person name="Clark L."/>
            <person name="Doggett J."/>
            <person name="Hall S."/>
            <person name="Kay M."/>
            <person name="Lennard N."/>
            <person name="McLay K."/>
            <person name="Mayes R."/>
            <person name="Pettett A."/>
            <person name="Rajandream M.A."/>
            <person name="Lyne M."/>
            <person name="Benes V."/>
            <person name="Rechmann S."/>
            <person name="Borkova D."/>
            <person name="Bloecker H."/>
            <person name="Scharfe M."/>
            <person name="Grimm M."/>
            <person name="Loehnert T.-H."/>
            <person name="Dose S."/>
            <person name="de Haan M."/>
            <person name="Maarse A.C."/>
            <person name="Schaefer M."/>
            <person name="Mueller-Auer S."/>
            <person name="Gabel C."/>
            <person name="Fuchs M."/>
            <person name="Fartmann B."/>
            <person name="Granderath K."/>
            <person name="Dauner D."/>
            <person name="Herzl A."/>
            <person name="Neumann S."/>
            <person name="Argiriou A."/>
            <person name="Vitale D."/>
            <person name="Liguori R."/>
            <person name="Piravandi E."/>
            <person name="Massenet O."/>
            <person name="Quigley F."/>
            <person name="Clabauld G."/>
            <person name="Muendlein A."/>
            <person name="Felber R."/>
            <person name="Schnabl S."/>
            <person name="Hiller R."/>
            <person name="Schmidt W."/>
            <person name="Lecharny A."/>
            <person name="Aubourg S."/>
            <person name="Chefdor F."/>
            <person name="Cooke R."/>
            <person name="Berger C."/>
            <person name="Monfort A."/>
            <person name="Casacuberta E."/>
            <person name="Gibbons T."/>
            <person name="Weber N."/>
            <person name="Vandenbol M."/>
            <person name="Bargues M."/>
            <person name="Terol J."/>
            <person name="Torres A."/>
            <person name="Perez-Perez A."/>
            <person name="Purnelle B."/>
            <person name="Bent E."/>
            <person name="Johnson S."/>
            <person name="Tacon D."/>
            <person name="Jesse T."/>
            <person name="Heijnen L."/>
            <person name="Schwarz S."/>
            <person name="Scholler P."/>
            <person name="Heber S."/>
            <person name="Francs P."/>
            <person name="Bielke C."/>
            <person name="Frishman D."/>
            <person name="Haase D."/>
            <person name="Lemcke K."/>
            <person name="Mewes H.-W."/>
            <person name="Stocker S."/>
            <person name="Zaccaria P."/>
            <person name="Bevan M."/>
            <person name="Wilson R.K."/>
            <person name="de la Bastide M."/>
            <person name="Habermann K."/>
            <person name="Parnell L."/>
            <person name="Dedhia N."/>
            <person name="Gnoj L."/>
            <person name="Schutz K."/>
            <person name="Huang E."/>
            <person name="Spiegel L."/>
            <person name="Sekhon M."/>
            <person name="Murray J."/>
            <person name="Sheet P."/>
            <person name="Cordes M."/>
            <person name="Abu-Threideh J."/>
            <person name="Stoneking T."/>
            <person name="Kalicki J."/>
            <person name="Graves T."/>
            <person name="Harmon G."/>
            <person name="Edwards J."/>
            <person name="Latreille P."/>
            <person name="Courtney L."/>
            <person name="Cloud J."/>
            <person name="Abbott A."/>
            <person name="Scott K."/>
            <person name="Johnson D."/>
            <person name="Minx P."/>
            <person name="Bentley D."/>
            <person name="Fulton B."/>
            <person name="Miller N."/>
            <person name="Greco T."/>
            <person name="Kemp K."/>
            <person name="Kramer J."/>
            <person name="Fulton L."/>
            <person name="Mardis E."/>
            <person name="Dante M."/>
            <person name="Pepin K."/>
            <person name="Hillier L.W."/>
            <person name="Nelson J."/>
            <person name="Spieth J."/>
            <person name="Ryan E."/>
            <person name="Andrews S."/>
            <person name="Geisel C."/>
            <person name="Layman D."/>
            <person name="Du H."/>
            <person name="Ali J."/>
            <person name="Berghoff A."/>
            <person name="Jones K."/>
            <person name="Drone K."/>
            <person name="Cotton M."/>
            <person name="Joshu C."/>
            <person name="Antonoiu B."/>
            <person name="Zidanic M."/>
            <person name="Strong C."/>
            <person name="Sun H."/>
            <person name="Lamar B."/>
            <person name="Yordan C."/>
            <person name="Ma P."/>
            <person name="Zhong J."/>
            <person name="Preston R."/>
            <person name="Vil D."/>
            <person name="Shekher M."/>
            <person name="Matero A."/>
            <person name="Shah R."/>
            <person name="Swaby I.K."/>
            <person name="O'Shaughnessy A."/>
            <person name="Rodriguez M."/>
            <person name="Hoffman J."/>
            <person name="Till S."/>
            <person name="Granat S."/>
            <person name="Shohdy N."/>
            <person name="Hasegawa A."/>
            <person name="Hameed A."/>
            <person name="Lodhi M."/>
            <person name="Johnson A."/>
            <person name="Chen E."/>
            <person name="Marra M.A."/>
            <person name="Martienssen R."/>
            <person name="McCombie W.R."/>
        </authorList>
    </citation>
    <scope>NUCLEOTIDE SEQUENCE [LARGE SCALE GENOMIC DNA]</scope>
    <source>
        <strain>cv. Columbia</strain>
    </source>
</reference>
<reference key="3">
    <citation type="journal article" date="2017" name="Plant J.">
        <title>Araport11: a complete reannotation of the Arabidopsis thaliana reference genome.</title>
        <authorList>
            <person name="Cheng C.Y."/>
            <person name="Krishnakumar V."/>
            <person name="Chan A.P."/>
            <person name="Thibaud-Nissen F."/>
            <person name="Schobel S."/>
            <person name="Town C.D."/>
        </authorList>
    </citation>
    <scope>GENOME REANNOTATION</scope>
    <source>
        <strain>cv. Columbia</strain>
    </source>
</reference>
<reference key="4">
    <citation type="journal article" date="2003" name="Science">
        <title>Empirical analysis of transcriptional activity in the Arabidopsis genome.</title>
        <authorList>
            <person name="Yamada K."/>
            <person name="Lim J."/>
            <person name="Dale J.M."/>
            <person name="Chen H."/>
            <person name="Shinn P."/>
            <person name="Palm C.J."/>
            <person name="Southwick A.M."/>
            <person name="Wu H.C."/>
            <person name="Kim C.J."/>
            <person name="Nguyen M."/>
            <person name="Pham P.K."/>
            <person name="Cheuk R.F."/>
            <person name="Karlin-Newmann G."/>
            <person name="Liu S.X."/>
            <person name="Lam B."/>
            <person name="Sakano H."/>
            <person name="Wu T."/>
            <person name="Yu G."/>
            <person name="Miranda M."/>
            <person name="Quach H.L."/>
            <person name="Tripp M."/>
            <person name="Chang C.H."/>
            <person name="Lee J.M."/>
            <person name="Toriumi M.J."/>
            <person name="Chan M.M."/>
            <person name="Tang C.C."/>
            <person name="Onodera C.S."/>
            <person name="Deng J.M."/>
            <person name="Akiyama K."/>
            <person name="Ansari Y."/>
            <person name="Arakawa T."/>
            <person name="Banh J."/>
            <person name="Banno F."/>
            <person name="Bowser L."/>
            <person name="Brooks S.Y."/>
            <person name="Carninci P."/>
            <person name="Chao Q."/>
            <person name="Choy N."/>
            <person name="Enju A."/>
            <person name="Goldsmith A.D."/>
            <person name="Gurjal M."/>
            <person name="Hansen N.F."/>
            <person name="Hayashizaki Y."/>
            <person name="Johnson-Hopson C."/>
            <person name="Hsuan V.W."/>
            <person name="Iida K."/>
            <person name="Karnes M."/>
            <person name="Khan S."/>
            <person name="Koesema E."/>
            <person name="Ishida J."/>
            <person name="Jiang P.X."/>
            <person name="Jones T."/>
            <person name="Kawai J."/>
            <person name="Kamiya A."/>
            <person name="Meyers C."/>
            <person name="Nakajima M."/>
            <person name="Narusaka M."/>
            <person name="Seki M."/>
            <person name="Sakurai T."/>
            <person name="Satou M."/>
            <person name="Tamse R."/>
            <person name="Vaysberg M."/>
            <person name="Wallender E.K."/>
            <person name="Wong C."/>
            <person name="Yamamura Y."/>
            <person name="Yuan S."/>
            <person name="Shinozaki K."/>
            <person name="Davis R.W."/>
            <person name="Theologis A."/>
            <person name="Ecker J.R."/>
        </authorList>
    </citation>
    <scope>NUCLEOTIDE SEQUENCE [LARGE SCALE MRNA]</scope>
    <source>
        <strain>cv. Columbia</strain>
    </source>
</reference>
<reference key="5">
    <citation type="journal article" date="2005" name="J. Cell Biol.">
        <title>A Sec14p-nodulin domain phosphatidylinositol transfer protein polarizes membrane growth of Arabidopsis thaliana root hairs.</title>
        <authorList>
            <person name="Vincent P."/>
            <person name="Chua M."/>
            <person name="Nogue F."/>
            <person name="Fairbrother A."/>
            <person name="Mekeel H."/>
            <person name="Xu Y."/>
            <person name="Allen N."/>
            <person name="Bibikova T.N."/>
            <person name="Gilroy S."/>
            <person name="Bankaitis V.A."/>
        </authorList>
    </citation>
    <scope>GENE FAMILY</scope>
</reference>
<reference key="6">
    <citation type="journal article" date="2006" name="Nat. Chem. Biol.">
        <title>Phosphatidylinositol transfer proteins and cellular nanoreactors for lipid signaling.</title>
        <authorList>
            <person name="Ile K.E."/>
            <person name="Schaaf G."/>
            <person name="Bankaitis V.A."/>
        </authorList>
    </citation>
    <scope>REVIEW</scope>
</reference>
<reference key="7">
    <citation type="journal article" date="2007" name="J. Plant Physiol.">
        <title>Identification of two phosphatidylinositol/phosphatidylcholine transfer protein genes that are predominately transcribed in the flowers of Arabidopsis thaliana.</title>
        <authorList>
            <person name="Mo P."/>
            <person name="Zhu Y."/>
            <person name="Liu X."/>
            <person name="Zhang A."/>
            <person name="Yan C."/>
            <person name="Wang D."/>
        </authorList>
    </citation>
    <scope>TISSUE SPECIFICITY</scope>
    <scope>DEVELOPMENTAL STAGE</scope>
    <scope>FUNCTION</scope>
</reference>
<name>SFH12_ARATH</name>
<sequence length="543" mass="61826">MTLIQDAELKPRMGSFKKRSSSKNLRYSMTKRRRSSKVMSVEIIEDVHDAEELKAVDAFRQSLILDELLPEKHDDYHMMLRFLKARKFDLEKTKQMWTEMLRWRKEFGADTVMEEFDFKEIDEVLKYYPQGHHGVDKEGRPVYIERLGLVDSTKLMQVTTMDRYVNYHVMEFERTFNVKFPACSIAAKKHIDQSTTILDVQGVGLKNFNKAARDLITRLQKVDGDNYPETLNRMFIINAGSGFRMLWNTVKSFLDPKTTAKIHVLGNKYQSKLLEIIDESELPEFLGGSCTCADNGGCMRSDKGPWKNPEIMKRVHNGDHKCSKGSQAENSGEKTIPEEDDSTTEPASEEEKASKEVEIVPAAHPAWNMPEAHKFSLSKKEVYAIQEACNNATTEGGRSPIFTGVMALVMGVVTMIKVTKNVPRKLTESTLYSSPVYCDDASMNKSAMQSEKMTVPAISGEDFMAIMKRMAELEQKVTVLSAQPTVMPPDKEEMLNAAISRSNVLEQELAATKKALDDSLGRQEELVAYIEKKKKKKKLFNYW</sequence>
<proteinExistence type="evidence at transcript level"/>
<gene>
    <name type="primary">SFH12</name>
    <name type="ordered locus">At4g36490</name>
    <name type="ORF">AP22.26</name>
    <name type="ORF">C7A10.870</name>
</gene>
<feature type="chain" id="PRO_0000423472" description="Phosphatidylinositol/phosphatidylcholine transfer protein SFH12">
    <location>
        <begin position="1"/>
        <end position="543"/>
    </location>
</feature>
<feature type="domain" description="CRAL-TRIO" evidence="3">
    <location>
        <begin position="120"/>
        <end position="294"/>
    </location>
</feature>
<feature type="region of interest" description="Disordered" evidence="4">
    <location>
        <begin position="316"/>
        <end position="356"/>
    </location>
</feature>
<feature type="coiled-coil region" evidence="2">
    <location>
        <begin position="490"/>
        <end position="526"/>
    </location>
</feature>
<organism>
    <name type="scientific">Arabidopsis thaliana</name>
    <name type="common">Mouse-ear cress</name>
    <dbReference type="NCBI Taxonomy" id="3702"/>
    <lineage>
        <taxon>Eukaryota</taxon>
        <taxon>Viridiplantae</taxon>
        <taxon>Streptophyta</taxon>
        <taxon>Embryophyta</taxon>
        <taxon>Tracheophyta</taxon>
        <taxon>Spermatophyta</taxon>
        <taxon>Magnoliopsida</taxon>
        <taxon>eudicotyledons</taxon>
        <taxon>Gunneridae</taxon>
        <taxon>Pentapetalae</taxon>
        <taxon>rosids</taxon>
        <taxon>malvids</taxon>
        <taxon>Brassicales</taxon>
        <taxon>Brassicaceae</taxon>
        <taxon>Camelineae</taxon>
        <taxon>Arabidopsis</taxon>
    </lineage>
</organism>